<protein>
    <recommendedName>
        <fullName evidence="1">Phospho-N-acetylmuramoyl-pentapeptide-transferase</fullName>
        <ecNumber evidence="1">2.7.8.13</ecNumber>
    </recommendedName>
    <alternativeName>
        <fullName evidence="1">UDP-MurNAc-pentapeptide phosphotransferase</fullName>
    </alternativeName>
</protein>
<reference key="1">
    <citation type="submission" date="2007-09" db="EMBL/GenBank/DDBJ databases">
        <title>Complete genome sequencing of Rickettsia bellii.</title>
        <authorList>
            <person name="Madan A."/>
            <person name="Lee H."/>
            <person name="Madan A."/>
            <person name="Yoon J.-G."/>
            <person name="Ryu G.-Y."/>
            <person name="Dasch G."/>
            <person name="Ereemeva M."/>
        </authorList>
    </citation>
    <scope>NUCLEOTIDE SEQUENCE [LARGE SCALE GENOMIC DNA]</scope>
    <source>
        <strain>OSU 85-389</strain>
    </source>
</reference>
<accession>A8GVM4</accession>
<comment type="function">
    <text evidence="1">Catalyzes the initial step of the lipid cycle reactions in the biosynthesis of the cell wall peptidoglycan: transfers peptidoglycan precursor phospho-MurNAc-pentapeptide from UDP-MurNAc-pentapeptide onto the lipid carrier undecaprenyl phosphate, yielding undecaprenyl-pyrophosphoryl-MurNAc-pentapeptide, known as lipid I.</text>
</comment>
<comment type="catalytic activity">
    <reaction evidence="1">
        <text>UDP-N-acetyl-alpha-D-muramoyl-L-alanyl-gamma-D-glutamyl-meso-2,6-diaminopimeloyl-D-alanyl-D-alanine + di-trans,octa-cis-undecaprenyl phosphate = di-trans,octa-cis-undecaprenyl diphospho-N-acetyl-alpha-D-muramoyl-L-alanyl-D-glutamyl-meso-2,6-diaminopimeloyl-D-alanyl-D-alanine + UMP</text>
        <dbReference type="Rhea" id="RHEA:28386"/>
        <dbReference type="ChEBI" id="CHEBI:57865"/>
        <dbReference type="ChEBI" id="CHEBI:60392"/>
        <dbReference type="ChEBI" id="CHEBI:61386"/>
        <dbReference type="ChEBI" id="CHEBI:61387"/>
        <dbReference type="EC" id="2.7.8.13"/>
    </reaction>
</comment>
<comment type="cofactor">
    <cofactor evidence="1">
        <name>Mg(2+)</name>
        <dbReference type="ChEBI" id="CHEBI:18420"/>
    </cofactor>
</comment>
<comment type="pathway">
    <text evidence="1">Cell wall biogenesis; peptidoglycan biosynthesis.</text>
</comment>
<comment type="subcellular location">
    <subcellularLocation>
        <location evidence="1">Cell inner membrane</location>
        <topology evidence="1">Multi-pass membrane protein</topology>
    </subcellularLocation>
</comment>
<comment type="similarity">
    <text evidence="1">Belongs to the glycosyltransferase 4 family. MraY subfamily.</text>
</comment>
<keyword id="KW-0131">Cell cycle</keyword>
<keyword id="KW-0132">Cell division</keyword>
<keyword id="KW-0997">Cell inner membrane</keyword>
<keyword id="KW-1003">Cell membrane</keyword>
<keyword id="KW-0133">Cell shape</keyword>
<keyword id="KW-0961">Cell wall biogenesis/degradation</keyword>
<keyword id="KW-0460">Magnesium</keyword>
<keyword id="KW-0472">Membrane</keyword>
<keyword id="KW-0479">Metal-binding</keyword>
<keyword id="KW-0573">Peptidoglycan synthesis</keyword>
<keyword id="KW-0808">Transferase</keyword>
<keyword id="KW-0812">Transmembrane</keyword>
<keyword id="KW-1133">Transmembrane helix</keyword>
<organism>
    <name type="scientific">Rickettsia bellii (strain OSU 85-389)</name>
    <dbReference type="NCBI Taxonomy" id="391896"/>
    <lineage>
        <taxon>Bacteria</taxon>
        <taxon>Pseudomonadati</taxon>
        <taxon>Pseudomonadota</taxon>
        <taxon>Alphaproteobacteria</taxon>
        <taxon>Rickettsiales</taxon>
        <taxon>Rickettsiaceae</taxon>
        <taxon>Rickettsieae</taxon>
        <taxon>Rickettsia</taxon>
        <taxon>belli group</taxon>
    </lineage>
</organism>
<name>MRAY_RICB8</name>
<proteinExistence type="inferred from homology"/>
<feature type="chain" id="PRO_1000003047" description="Phospho-N-acetylmuramoyl-pentapeptide-transferase">
    <location>
        <begin position="1"/>
        <end position="361"/>
    </location>
</feature>
<feature type="transmembrane region" description="Helical" evidence="1">
    <location>
        <begin position="28"/>
        <end position="48"/>
    </location>
</feature>
<feature type="transmembrane region" description="Helical" evidence="1">
    <location>
        <begin position="74"/>
        <end position="94"/>
    </location>
</feature>
<feature type="transmembrane region" description="Helical" evidence="1">
    <location>
        <begin position="99"/>
        <end position="119"/>
    </location>
</feature>
<feature type="transmembrane region" description="Helical" evidence="1">
    <location>
        <begin position="135"/>
        <end position="155"/>
    </location>
</feature>
<feature type="transmembrane region" description="Helical" evidence="1">
    <location>
        <begin position="167"/>
        <end position="187"/>
    </location>
</feature>
<feature type="transmembrane region" description="Helical" evidence="1">
    <location>
        <begin position="203"/>
        <end position="223"/>
    </location>
</feature>
<feature type="transmembrane region" description="Helical" evidence="1">
    <location>
        <begin position="236"/>
        <end position="256"/>
    </location>
</feature>
<feature type="transmembrane region" description="Helical" evidence="1">
    <location>
        <begin position="263"/>
        <end position="283"/>
    </location>
</feature>
<feature type="transmembrane region" description="Helical" evidence="1">
    <location>
        <begin position="288"/>
        <end position="308"/>
    </location>
</feature>
<feature type="transmembrane region" description="Helical" evidence="1">
    <location>
        <begin position="338"/>
        <end position="358"/>
    </location>
</feature>
<dbReference type="EC" id="2.7.8.13" evidence="1"/>
<dbReference type="EMBL" id="CP000849">
    <property type="protein sequence ID" value="ABV78901.1"/>
    <property type="molecule type" value="Genomic_DNA"/>
</dbReference>
<dbReference type="RefSeq" id="WP_012151725.1">
    <property type="nucleotide sequence ID" value="NC_009883.1"/>
</dbReference>
<dbReference type="SMR" id="A8GVM4"/>
<dbReference type="KEGG" id="rbo:A1I_02650"/>
<dbReference type="HOGENOM" id="CLU_023982_0_0_5"/>
<dbReference type="UniPathway" id="UPA00219"/>
<dbReference type="GO" id="GO:0005886">
    <property type="term" value="C:plasma membrane"/>
    <property type="evidence" value="ECO:0007669"/>
    <property type="project" value="UniProtKB-SubCell"/>
</dbReference>
<dbReference type="GO" id="GO:0046872">
    <property type="term" value="F:metal ion binding"/>
    <property type="evidence" value="ECO:0007669"/>
    <property type="project" value="UniProtKB-KW"/>
</dbReference>
<dbReference type="GO" id="GO:0008963">
    <property type="term" value="F:phospho-N-acetylmuramoyl-pentapeptide-transferase activity"/>
    <property type="evidence" value="ECO:0007669"/>
    <property type="project" value="UniProtKB-UniRule"/>
</dbReference>
<dbReference type="GO" id="GO:0051992">
    <property type="term" value="F:UDP-N-acetylmuramoyl-L-alanyl-D-glutamyl-meso-2,6-diaminopimelyl-D-alanyl-D-alanine:undecaprenyl-phosphate transferase activity"/>
    <property type="evidence" value="ECO:0007669"/>
    <property type="project" value="RHEA"/>
</dbReference>
<dbReference type="GO" id="GO:0051301">
    <property type="term" value="P:cell division"/>
    <property type="evidence" value="ECO:0007669"/>
    <property type="project" value="UniProtKB-KW"/>
</dbReference>
<dbReference type="GO" id="GO:0071555">
    <property type="term" value="P:cell wall organization"/>
    <property type="evidence" value="ECO:0007669"/>
    <property type="project" value="UniProtKB-KW"/>
</dbReference>
<dbReference type="GO" id="GO:0009252">
    <property type="term" value="P:peptidoglycan biosynthetic process"/>
    <property type="evidence" value="ECO:0007669"/>
    <property type="project" value="UniProtKB-UniRule"/>
</dbReference>
<dbReference type="GO" id="GO:0008360">
    <property type="term" value="P:regulation of cell shape"/>
    <property type="evidence" value="ECO:0007669"/>
    <property type="project" value="UniProtKB-KW"/>
</dbReference>
<dbReference type="CDD" id="cd06852">
    <property type="entry name" value="GT_MraY"/>
    <property type="match status" value="1"/>
</dbReference>
<dbReference type="HAMAP" id="MF_00038">
    <property type="entry name" value="MraY"/>
    <property type="match status" value="1"/>
</dbReference>
<dbReference type="InterPro" id="IPR000715">
    <property type="entry name" value="Glycosyl_transferase_4"/>
</dbReference>
<dbReference type="InterPro" id="IPR003524">
    <property type="entry name" value="PNAcMuramoyl-5peptid_Trfase"/>
</dbReference>
<dbReference type="InterPro" id="IPR018480">
    <property type="entry name" value="PNAcMuramoyl-5peptid_Trfase_CS"/>
</dbReference>
<dbReference type="NCBIfam" id="TIGR00445">
    <property type="entry name" value="mraY"/>
    <property type="match status" value="1"/>
</dbReference>
<dbReference type="PANTHER" id="PTHR22926">
    <property type="entry name" value="PHOSPHO-N-ACETYLMURAMOYL-PENTAPEPTIDE-TRANSFERASE"/>
    <property type="match status" value="1"/>
</dbReference>
<dbReference type="PANTHER" id="PTHR22926:SF5">
    <property type="entry name" value="PHOSPHO-N-ACETYLMURAMOYL-PENTAPEPTIDE-TRANSFERASE HOMOLOG"/>
    <property type="match status" value="1"/>
</dbReference>
<dbReference type="Pfam" id="PF00953">
    <property type="entry name" value="Glycos_transf_4"/>
    <property type="match status" value="1"/>
</dbReference>
<dbReference type="Pfam" id="PF10555">
    <property type="entry name" value="MraY_sig1"/>
    <property type="match status" value="1"/>
</dbReference>
<dbReference type="PROSITE" id="PS01347">
    <property type="entry name" value="MRAY_1"/>
    <property type="match status" value="1"/>
</dbReference>
<dbReference type="PROSITE" id="PS01348">
    <property type="entry name" value="MRAY_2"/>
    <property type="match status" value="1"/>
</dbReference>
<gene>
    <name evidence="1" type="primary">mraY</name>
    <name type="ordered locus">A1I_02650</name>
</gene>
<evidence type="ECO:0000255" key="1">
    <source>
        <dbReference type="HAMAP-Rule" id="MF_00038"/>
    </source>
</evidence>
<sequence length="361" mass="39833">MLYNLLLPYIHNSHIANLFHYITFRSGLAVLVTLSLSFLIGPRLIKFLQTLQKYGQPIRLDGPESHQAKAGTPTMGGIMIILSSCFSTLLLADLTNKYIWITLFGFVSFSIIGFLDDYAKVTKNNHYGVKGKSKLLLQGIISLIVCILLEYTIDSPSHMLNVPFFKSLSMDLGYLYIFFAIFVIVGASNAVNLTDGLDGLATVPIALTAGSFALISYLVGNLIYSNYLQLTYLPNTGELTIFCASIVGSCLGFLWFNAQPAEVFMGDTGSLSLGGVLGIISVITKHEIVLGIVGGLFVIETISVIMQVYYFKATKGKRIFKMAPLHHHFEKSGWTESKVVIRFWIISLIFVLIGLSSLKLR</sequence>